<protein>
    <recommendedName>
        <fullName evidence="5">C4-dicarboxylate transport protein 2</fullName>
    </recommendedName>
</protein>
<name>DCTA2_PSEAE</name>
<keyword id="KW-0997">Cell inner membrane</keyword>
<keyword id="KW-1003">Cell membrane</keyword>
<keyword id="KW-0472">Membrane</keyword>
<keyword id="KW-1185">Reference proteome</keyword>
<keyword id="KW-0769">Symport</keyword>
<keyword id="KW-0812">Transmembrane</keyword>
<keyword id="KW-1133">Transmembrane helix</keyword>
<keyword id="KW-0813">Transport</keyword>
<dbReference type="EMBL" id="AE004091">
    <property type="protein sequence ID" value="AAG04572.1"/>
    <property type="molecule type" value="Genomic_DNA"/>
</dbReference>
<dbReference type="PIR" id="D83498">
    <property type="entry name" value="D83498"/>
</dbReference>
<dbReference type="RefSeq" id="NP_249874.1">
    <property type="nucleotide sequence ID" value="NC_002516.2"/>
</dbReference>
<dbReference type="RefSeq" id="WP_003082442.1">
    <property type="nucleotide sequence ID" value="NZ_QZGE01000006.1"/>
</dbReference>
<dbReference type="SMR" id="Q9I4F5"/>
<dbReference type="FunCoup" id="Q9I4F5">
    <property type="interactions" value="320"/>
</dbReference>
<dbReference type="STRING" id="208964.PA1183"/>
<dbReference type="PaxDb" id="208964-PA1183"/>
<dbReference type="GeneID" id="880848"/>
<dbReference type="KEGG" id="pae:PA1183"/>
<dbReference type="PATRIC" id="fig|208964.12.peg.1229"/>
<dbReference type="PseudoCAP" id="PA1183"/>
<dbReference type="HOGENOM" id="CLU_019375_7_0_6"/>
<dbReference type="InParanoid" id="Q9I4F5"/>
<dbReference type="OrthoDB" id="9766690at2"/>
<dbReference type="PhylomeDB" id="Q9I4F5"/>
<dbReference type="BioCyc" id="PAER208964:G1FZ6-1208-MONOMER"/>
<dbReference type="Proteomes" id="UP000002438">
    <property type="component" value="Chromosome"/>
</dbReference>
<dbReference type="GO" id="GO:0005886">
    <property type="term" value="C:plasma membrane"/>
    <property type="evidence" value="ECO:0000318"/>
    <property type="project" value="GO_Central"/>
</dbReference>
<dbReference type="GO" id="GO:0015138">
    <property type="term" value="F:fumarate transmembrane transporter activity"/>
    <property type="evidence" value="ECO:0000318"/>
    <property type="project" value="GO_Central"/>
</dbReference>
<dbReference type="GO" id="GO:0015366">
    <property type="term" value="F:malate:proton symporter activity"/>
    <property type="evidence" value="ECO:0000318"/>
    <property type="project" value="GO_Central"/>
</dbReference>
<dbReference type="GO" id="GO:0015141">
    <property type="term" value="F:succinate transmembrane transporter activity"/>
    <property type="evidence" value="ECO:0000318"/>
    <property type="project" value="GO_Central"/>
</dbReference>
<dbReference type="GO" id="GO:0015740">
    <property type="term" value="P:C4-dicarboxylate transport"/>
    <property type="evidence" value="ECO:0000314"/>
    <property type="project" value="PseudoCAP"/>
</dbReference>
<dbReference type="GO" id="GO:0006835">
    <property type="term" value="P:dicarboxylic acid transport"/>
    <property type="evidence" value="ECO:0000315"/>
    <property type="project" value="PseudoCAP"/>
</dbReference>
<dbReference type="GO" id="GO:0070778">
    <property type="term" value="P:L-aspartate transmembrane transport"/>
    <property type="evidence" value="ECO:0000318"/>
    <property type="project" value="GO_Central"/>
</dbReference>
<dbReference type="FunFam" id="1.10.3860.10:FF:000001">
    <property type="entry name" value="C4-dicarboxylate transport protein"/>
    <property type="match status" value="1"/>
</dbReference>
<dbReference type="Gene3D" id="1.10.3860.10">
    <property type="entry name" value="Sodium:dicarboxylate symporter"/>
    <property type="match status" value="1"/>
</dbReference>
<dbReference type="HAMAP" id="MF_01300">
    <property type="entry name" value="C4_dicarb_transport"/>
    <property type="match status" value="1"/>
</dbReference>
<dbReference type="InterPro" id="IPR023954">
    <property type="entry name" value="C4_dicarb_transport"/>
</dbReference>
<dbReference type="InterPro" id="IPR001991">
    <property type="entry name" value="Na-dicarboxylate_symporter"/>
</dbReference>
<dbReference type="InterPro" id="IPR018107">
    <property type="entry name" value="Na-dicarboxylate_symporter_CS"/>
</dbReference>
<dbReference type="InterPro" id="IPR036458">
    <property type="entry name" value="Na:dicarbo_symporter_sf"/>
</dbReference>
<dbReference type="NCBIfam" id="NF002461">
    <property type="entry name" value="PRK01663.1"/>
    <property type="match status" value="1"/>
</dbReference>
<dbReference type="NCBIfam" id="NF009587">
    <property type="entry name" value="PRK13027.1"/>
    <property type="match status" value="1"/>
</dbReference>
<dbReference type="PANTHER" id="PTHR42865:SF1">
    <property type="entry name" value="AEROBIC C4-DICARBOXYLATE TRANSPORT PROTEIN"/>
    <property type="match status" value="1"/>
</dbReference>
<dbReference type="PANTHER" id="PTHR42865">
    <property type="entry name" value="PROTON/GLUTAMATE-ASPARTATE SYMPORTER"/>
    <property type="match status" value="1"/>
</dbReference>
<dbReference type="Pfam" id="PF00375">
    <property type="entry name" value="SDF"/>
    <property type="match status" value="1"/>
</dbReference>
<dbReference type="PRINTS" id="PR00173">
    <property type="entry name" value="EDTRNSPORT"/>
</dbReference>
<dbReference type="SUPFAM" id="SSF118215">
    <property type="entry name" value="Proton glutamate symport protein"/>
    <property type="match status" value="1"/>
</dbReference>
<dbReference type="PROSITE" id="PS00714">
    <property type="entry name" value="NA_DICARBOXYL_SYMP_2"/>
    <property type="match status" value="1"/>
</dbReference>
<proteinExistence type="evidence at transcript level"/>
<gene>
    <name type="primary">dctA2</name>
    <name evidence="4" type="synonym">dctA</name>
    <name type="ordered locus">PA1183</name>
</gene>
<reference key="1">
    <citation type="journal article" date="2000" name="Nature">
        <title>Complete genome sequence of Pseudomonas aeruginosa PAO1, an opportunistic pathogen.</title>
        <authorList>
            <person name="Stover C.K."/>
            <person name="Pham X.-Q.T."/>
            <person name="Erwin A.L."/>
            <person name="Mizoguchi S.D."/>
            <person name="Warrener P."/>
            <person name="Hickey M.J."/>
            <person name="Brinkman F.S.L."/>
            <person name="Hufnagle W.O."/>
            <person name="Kowalik D.J."/>
            <person name="Lagrou M."/>
            <person name="Garber R.L."/>
            <person name="Goltry L."/>
            <person name="Tolentino E."/>
            <person name="Westbrock-Wadman S."/>
            <person name="Yuan Y."/>
            <person name="Brody L.L."/>
            <person name="Coulter S.N."/>
            <person name="Folger K.R."/>
            <person name="Kas A."/>
            <person name="Larbig K."/>
            <person name="Lim R.M."/>
            <person name="Smith K.A."/>
            <person name="Spencer D.H."/>
            <person name="Wong G.K.-S."/>
            <person name="Wu Z."/>
            <person name="Paulsen I.T."/>
            <person name="Reizer J."/>
            <person name="Saier M.H. Jr."/>
            <person name="Hancock R.E.W."/>
            <person name="Lory S."/>
            <person name="Olson M.V."/>
        </authorList>
    </citation>
    <scope>NUCLEOTIDE SEQUENCE [LARGE SCALE GENOMIC DNA]</scope>
    <source>
        <strain>ATCC 15692 / DSM 22644 / CIP 104116 / JCM 14847 / LMG 12228 / 1C / PRS 101 / PAO1</strain>
    </source>
</reference>
<reference key="2">
    <citation type="journal article" date="2011" name="J. Bacteriol.">
        <title>Identification of C(4)-dicarboxylate transport systems in Pseudomonas aeruginosa PAO1.</title>
        <authorList>
            <person name="Valentini M."/>
            <person name="Storelli N."/>
            <person name="Lapouge K."/>
        </authorList>
    </citation>
    <scope>FUNCTION</scope>
    <scope>INDUCTION</scope>
    <scope>DISRUPTION PHENOTYPE</scope>
    <source>
        <strain>ATCC 15692 / DSM 22644 / CIP 104116 / JCM 14847 / LMG 12228 / 1C / PRS 101 / PAO1</strain>
    </source>
</reference>
<organism>
    <name type="scientific">Pseudomonas aeruginosa (strain ATCC 15692 / DSM 22644 / CIP 104116 / JCM 14847 / LMG 12228 / 1C / PRS 101 / PAO1)</name>
    <dbReference type="NCBI Taxonomy" id="208964"/>
    <lineage>
        <taxon>Bacteria</taxon>
        <taxon>Pseudomonadati</taxon>
        <taxon>Pseudomonadota</taxon>
        <taxon>Gammaproteobacteria</taxon>
        <taxon>Pseudomonadales</taxon>
        <taxon>Pseudomonadaceae</taxon>
        <taxon>Pseudomonas</taxon>
    </lineage>
</organism>
<sequence>MTKQPFYKSLYVQVLVAIAIGIALGHWYPETAVAMKPFGDGFVKLIKMAIAPIIFCTVVTGIAGMQSMKSVGKTGGMALLYFEVVSTVALIIGLVVVNVVQPGAGMHVDPNTLDTSKIAAYAAAGEKQSTVDFLMNVIPGTVVGAFANGDILQVLFFSVLFGYALHRLGSYGKPVFEFIERVSHVMFNIINVIMKVAPIGAFGAMAFTIGAYGVGSLVQLGQLMLCFYITCILFVLIVLGGIARAHGFSILRFIRYIREELLIVLGTSSSESALPRMIDKMEKLGCNKSVVGLVIPTGYSFNLDGTSIYLTMAAVFIAQATDTPMDITHQITLLLVLLIASKGAAGVTGSGFIVLAATLSAVGHLPVAGLALILGIDRFMSEARALTNLVGNGVATVVVSKWCKQLDEGTLQRELAGEGNASSPASDIPVGGREAV</sequence>
<comment type="function">
    <text evidence="1 3">Responsible for the transport of dicarboxylates such as succinate, fumarate, and malate from the periplasm across the inner membrane.</text>
</comment>
<comment type="subcellular location">
    <subcellularLocation>
        <location evidence="1">Cell inner membrane</location>
        <topology evidence="1">Multi-pass membrane protein</topology>
    </subcellularLocation>
</comment>
<comment type="induction">
    <text evidence="3">Expression is maximal in early exponential growth phase and declines with cell density to reach a plateau in the stationary growth phase. Induced by the C(4)-dicarboxylates succinate, fumarate and malate. Positively regulated by RpoN and the DctB/DctD two-component system. Negatively autoregulated.</text>
</comment>
<comment type="disruption phenotype">
    <text evidence="3">Inactivation of the gene causes a growth defect in minimal media supplemented with succinate, fumarate or malate. The dctA-dctPQM double mutant shows no growth on malate and fumarate and residual growth on succinate.</text>
</comment>
<comment type="miscellaneous">
    <text evidence="3">The DctPQM carrier is more efficient than the DctA carrier for the utilization of succinate at micromolar concentrations, whereas DctA is the major transporter at millimolar concentrations.</text>
</comment>
<comment type="similarity">
    <text evidence="1">Belongs to the dicarboxylate/amino acid:cation symporter (DAACS) (TC 2.A.23) family.</text>
</comment>
<feature type="chain" id="PRO_0000202098" description="C4-dicarboxylate transport protein 2">
    <location>
        <begin position="1"/>
        <end position="436"/>
    </location>
</feature>
<feature type="transmembrane region" description="Helical" evidence="1">
    <location>
        <begin position="14"/>
        <end position="34"/>
    </location>
</feature>
<feature type="transmembrane region" description="Helical" evidence="1">
    <location>
        <begin position="45"/>
        <end position="65"/>
    </location>
</feature>
<feature type="transmembrane region" description="Helical" evidence="1">
    <location>
        <begin position="77"/>
        <end position="97"/>
    </location>
</feature>
<feature type="transmembrane region" description="Helical" evidence="1">
    <location>
        <begin position="142"/>
        <end position="162"/>
    </location>
</feature>
<feature type="transmembrane region" description="Helical" evidence="1">
    <location>
        <begin position="198"/>
        <end position="218"/>
    </location>
</feature>
<feature type="transmembrane region" description="Helical" evidence="1">
    <location>
        <begin position="223"/>
        <end position="243"/>
    </location>
</feature>
<feature type="transmembrane region" description="Helical" evidence="1">
    <location>
        <begin position="290"/>
        <end position="310"/>
    </location>
</feature>
<feature type="transmembrane region" description="Helical" evidence="1">
    <location>
        <begin position="331"/>
        <end position="351"/>
    </location>
</feature>
<feature type="transmembrane region" description="Helical" evidence="1">
    <location>
        <begin position="353"/>
        <end position="373"/>
    </location>
</feature>
<feature type="region of interest" description="Disordered" evidence="2">
    <location>
        <begin position="414"/>
        <end position="436"/>
    </location>
</feature>
<evidence type="ECO:0000255" key="1">
    <source>
        <dbReference type="HAMAP-Rule" id="MF_01300"/>
    </source>
</evidence>
<evidence type="ECO:0000256" key="2">
    <source>
        <dbReference type="SAM" id="MobiDB-lite"/>
    </source>
</evidence>
<evidence type="ECO:0000269" key="3">
    <source>
    </source>
</evidence>
<evidence type="ECO:0000303" key="4">
    <source>
    </source>
</evidence>
<evidence type="ECO:0000305" key="5"/>
<accession>Q9I4F5</accession>